<protein>
    <recommendedName>
        <fullName evidence="9">Nucleus-vacuole junction protein 2</fullName>
    </recommendedName>
</protein>
<proteinExistence type="evidence at protein level"/>
<keyword id="KW-0256">Endoplasmic reticulum</keyword>
<keyword id="KW-0325">Glycoprotein</keyword>
<keyword id="KW-0445">Lipid transport</keyword>
<keyword id="KW-0446">Lipid-binding</keyword>
<keyword id="KW-0472">Membrane</keyword>
<keyword id="KW-0539">Nucleus</keyword>
<keyword id="KW-0597">Phosphoprotein</keyword>
<keyword id="KW-1185">Reference proteome</keyword>
<keyword id="KW-0735">Signal-anchor</keyword>
<keyword id="KW-0812">Transmembrane</keyword>
<keyword id="KW-1133">Transmembrane helix</keyword>
<keyword id="KW-0813">Transport</keyword>
<dbReference type="EMBL" id="U51033">
    <property type="protein sequence ID" value="AAB68138.1"/>
    <property type="molecule type" value="Genomic_DNA"/>
</dbReference>
<dbReference type="EMBL" id="BK006949">
    <property type="protein sequence ID" value="DAA11507.1"/>
    <property type="molecule type" value="Genomic_DNA"/>
</dbReference>
<dbReference type="PIR" id="S69075">
    <property type="entry name" value="S69075"/>
</dbReference>
<dbReference type="RefSeq" id="NP_015416.1">
    <property type="nucleotide sequence ID" value="NM_001184188.1"/>
</dbReference>
<dbReference type="BioGRID" id="36260">
    <property type="interactions" value="105"/>
</dbReference>
<dbReference type="FunCoup" id="Q06833">
    <property type="interactions" value="47"/>
</dbReference>
<dbReference type="IntAct" id="Q06833">
    <property type="interactions" value="23"/>
</dbReference>
<dbReference type="MINT" id="Q06833"/>
<dbReference type="STRING" id="4932.YPR091C"/>
<dbReference type="GlyCosmos" id="Q06833">
    <property type="glycosylation" value="11 sites, No reported glycans"/>
</dbReference>
<dbReference type="GlyGen" id="Q06833">
    <property type="glycosylation" value="12 sites, 1 O-linked glycan (1 site)"/>
</dbReference>
<dbReference type="iPTMnet" id="Q06833"/>
<dbReference type="PaxDb" id="4932-YPR091C"/>
<dbReference type="PeptideAtlas" id="Q06833"/>
<dbReference type="EnsemblFungi" id="YPR091C_mRNA">
    <property type="protein sequence ID" value="YPR091C"/>
    <property type="gene ID" value="YPR091C"/>
</dbReference>
<dbReference type="GeneID" id="856207"/>
<dbReference type="KEGG" id="sce:YPR091C"/>
<dbReference type="AGR" id="SGD:S000006295"/>
<dbReference type="SGD" id="S000006295">
    <property type="gene designation" value="NVJ2"/>
</dbReference>
<dbReference type="VEuPathDB" id="FungiDB:YPR091C"/>
<dbReference type="eggNOG" id="KOG2238">
    <property type="taxonomic scope" value="Eukaryota"/>
</dbReference>
<dbReference type="GeneTree" id="ENSGT00940000173509"/>
<dbReference type="HOGENOM" id="CLU_012852_2_0_1"/>
<dbReference type="InParanoid" id="Q06833"/>
<dbReference type="OMA" id="MDKEDWY"/>
<dbReference type="OrthoDB" id="26740at2759"/>
<dbReference type="BioCyc" id="YEAST:G3O-34233-MONOMER"/>
<dbReference type="BioGRID-ORCS" id="856207">
    <property type="hits" value="1 hit in 10 CRISPR screens"/>
</dbReference>
<dbReference type="PRO" id="PR:Q06833"/>
<dbReference type="Proteomes" id="UP000002311">
    <property type="component" value="Chromosome XVI"/>
</dbReference>
<dbReference type="RNAct" id="Q06833">
    <property type="molecule type" value="protein"/>
</dbReference>
<dbReference type="GO" id="GO:0071944">
    <property type="term" value="C:cell periphery"/>
    <property type="evidence" value="ECO:0007005"/>
    <property type="project" value="SGD"/>
</dbReference>
<dbReference type="GO" id="GO:0005783">
    <property type="term" value="C:endoplasmic reticulum"/>
    <property type="evidence" value="ECO:0007005"/>
    <property type="project" value="SGD"/>
</dbReference>
<dbReference type="GO" id="GO:0005789">
    <property type="term" value="C:endoplasmic reticulum membrane"/>
    <property type="evidence" value="ECO:0007669"/>
    <property type="project" value="UniProtKB-SubCell"/>
</dbReference>
<dbReference type="GO" id="GO:0033116">
    <property type="term" value="C:endoplasmic reticulum-Golgi intermediate compartment membrane"/>
    <property type="evidence" value="ECO:0000314"/>
    <property type="project" value="SGD"/>
</dbReference>
<dbReference type="GO" id="GO:0031965">
    <property type="term" value="C:nuclear membrane"/>
    <property type="evidence" value="ECO:0007669"/>
    <property type="project" value="UniProtKB-SubCell"/>
</dbReference>
<dbReference type="GO" id="GO:0071561">
    <property type="term" value="C:nucleus-vacuole junction"/>
    <property type="evidence" value="ECO:0000314"/>
    <property type="project" value="SGD"/>
</dbReference>
<dbReference type="GO" id="GO:0008289">
    <property type="term" value="F:lipid binding"/>
    <property type="evidence" value="ECO:0000314"/>
    <property type="project" value="SGD"/>
</dbReference>
<dbReference type="GO" id="GO:0005319">
    <property type="term" value="F:lipid transporter activity"/>
    <property type="evidence" value="ECO:0000314"/>
    <property type="project" value="SGD"/>
</dbReference>
<dbReference type="GO" id="GO:0035621">
    <property type="term" value="P:ER to Golgi ceramide transport"/>
    <property type="evidence" value="ECO:0000315"/>
    <property type="project" value="UniProtKB"/>
</dbReference>
<dbReference type="CDD" id="cd21675">
    <property type="entry name" value="SMP_TEX2"/>
    <property type="match status" value="1"/>
</dbReference>
<dbReference type="InterPro" id="IPR019411">
    <property type="entry name" value="MMM1_dom"/>
</dbReference>
<dbReference type="InterPro" id="IPR001849">
    <property type="entry name" value="PH_domain"/>
</dbReference>
<dbReference type="InterPro" id="IPR031468">
    <property type="entry name" value="SMP_LBD"/>
</dbReference>
<dbReference type="PANTHER" id="PTHR13466:SF19">
    <property type="entry name" value="NUCLEUS-VACUOLE JUNCTION PROTEIN 2"/>
    <property type="match status" value="1"/>
</dbReference>
<dbReference type="PANTHER" id="PTHR13466">
    <property type="entry name" value="TEX2 PROTEIN-RELATED"/>
    <property type="match status" value="1"/>
</dbReference>
<dbReference type="Pfam" id="PF10296">
    <property type="entry name" value="MMM1"/>
    <property type="match status" value="1"/>
</dbReference>
<dbReference type="SMART" id="SM00233">
    <property type="entry name" value="PH"/>
    <property type="match status" value="1"/>
</dbReference>
<dbReference type="SUPFAM" id="SSF50729">
    <property type="entry name" value="PH domain-like"/>
    <property type="match status" value="1"/>
</dbReference>
<dbReference type="PROSITE" id="PS51847">
    <property type="entry name" value="SMP"/>
    <property type="match status" value="1"/>
</dbReference>
<reference key="1">
    <citation type="journal article" date="1997" name="Nature">
        <title>The nucleotide sequence of Saccharomyces cerevisiae chromosome XVI.</title>
        <authorList>
            <person name="Bussey H."/>
            <person name="Storms R.K."/>
            <person name="Ahmed A."/>
            <person name="Albermann K."/>
            <person name="Allen E."/>
            <person name="Ansorge W."/>
            <person name="Araujo R."/>
            <person name="Aparicio A."/>
            <person name="Barrell B.G."/>
            <person name="Badcock K."/>
            <person name="Benes V."/>
            <person name="Botstein D."/>
            <person name="Bowman S."/>
            <person name="Brueckner M."/>
            <person name="Carpenter J."/>
            <person name="Cherry J.M."/>
            <person name="Chung E."/>
            <person name="Churcher C.M."/>
            <person name="Coster F."/>
            <person name="Davis K."/>
            <person name="Davis R.W."/>
            <person name="Dietrich F.S."/>
            <person name="Delius H."/>
            <person name="DiPaolo T."/>
            <person name="Dubois E."/>
            <person name="Duesterhoeft A."/>
            <person name="Duncan M."/>
            <person name="Floeth M."/>
            <person name="Fortin N."/>
            <person name="Friesen J.D."/>
            <person name="Fritz C."/>
            <person name="Goffeau A."/>
            <person name="Hall J."/>
            <person name="Hebling U."/>
            <person name="Heumann K."/>
            <person name="Hilbert H."/>
            <person name="Hillier L.W."/>
            <person name="Hunicke-Smith S."/>
            <person name="Hyman R.W."/>
            <person name="Johnston M."/>
            <person name="Kalman S."/>
            <person name="Kleine K."/>
            <person name="Komp C."/>
            <person name="Kurdi O."/>
            <person name="Lashkari D."/>
            <person name="Lew H."/>
            <person name="Lin A."/>
            <person name="Lin D."/>
            <person name="Louis E.J."/>
            <person name="Marathe R."/>
            <person name="Messenguy F."/>
            <person name="Mewes H.-W."/>
            <person name="Mirtipati S."/>
            <person name="Moestl D."/>
            <person name="Mueller-Auer S."/>
            <person name="Namath A."/>
            <person name="Nentwich U."/>
            <person name="Oefner P."/>
            <person name="Pearson D."/>
            <person name="Petel F.X."/>
            <person name="Pohl T.M."/>
            <person name="Purnelle B."/>
            <person name="Rajandream M.A."/>
            <person name="Rechmann S."/>
            <person name="Rieger M."/>
            <person name="Riles L."/>
            <person name="Roberts D."/>
            <person name="Schaefer M."/>
            <person name="Scharfe M."/>
            <person name="Scherens B."/>
            <person name="Schramm S."/>
            <person name="Schroeder M."/>
            <person name="Sdicu A.-M."/>
            <person name="Tettelin H."/>
            <person name="Urrestarazu L.A."/>
            <person name="Ushinsky S."/>
            <person name="Vierendeels F."/>
            <person name="Vissers S."/>
            <person name="Voss H."/>
            <person name="Walsh S.V."/>
            <person name="Wambutt R."/>
            <person name="Wang Y."/>
            <person name="Wedler E."/>
            <person name="Wedler H."/>
            <person name="Winnett E."/>
            <person name="Zhong W.-W."/>
            <person name="Zollner A."/>
            <person name="Vo D.H."/>
            <person name="Hani J."/>
        </authorList>
    </citation>
    <scope>NUCLEOTIDE SEQUENCE [LARGE SCALE GENOMIC DNA]</scope>
    <source>
        <strain>ATCC 204508 / S288c</strain>
    </source>
</reference>
<reference key="2">
    <citation type="journal article" date="2014" name="G3 (Bethesda)">
        <title>The reference genome sequence of Saccharomyces cerevisiae: Then and now.</title>
        <authorList>
            <person name="Engel S.R."/>
            <person name="Dietrich F.S."/>
            <person name="Fisk D.G."/>
            <person name="Binkley G."/>
            <person name="Balakrishnan R."/>
            <person name="Costanzo M.C."/>
            <person name="Dwight S.S."/>
            <person name="Hitz B.C."/>
            <person name="Karra K."/>
            <person name="Nash R.S."/>
            <person name="Weng S."/>
            <person name="Wong E.D."/>
            <person name="Lloyd P."/>
            <person name="Skrzypek M.S."/>
            <person name="Miyasato S.R."/>
            <person name="Simison M."/>
            <person name="Cherry J.M."/>
        </authorList>
    </citation>
    <scope>GENOME REANNOTATION</scope>
    <source>
        <strain>ATCC 204508 / S288c</strain>
    </source>
</reference>
<reference key="3">
    <citation type="journal article" date="2003" name="Nature">
        <title>Global analysis of protein localization in budding yeast.</title>
        <authorList>
            <person name="Huh W.-K."/>
            <person name="Falvo J.V."/>
            <person name="Gerke L.C."/>
            <person name="Carroll A.S."/>
            <person name="Howson R.W."/>
            <person name="Weissman J.S."/>
            <person name="O'Shea E.K."/>
        </authorList>
    </citation>
    <scope>SUBCELLULAR LOCATION [LARGE SCALE ANALYSIS]</scope>
</reference>
<reference key="4">
    <citation type="journal article" date="2003" name="Nature">
        <title>Global analysis of protein expression in yeast.</title>
        <authorList>
            <person name="Ghaemmaghami S."/>
            <person name="Huh W.-K."/>
            <person name="Bower K."/>
            <person name="Howson R.W."/>
            <person name="Belle A."/>
            <person name="Dephoure N."/>
            <person name="O'Shea E.K."/>
            <person name="Weissman J.S."/>
        </authorList>
    </citation>
    <scope>LEVEL OF PROTEIN EXPRESSION [LARGE SCALE ANALYSIS]</scope>
</reference>
<reference key="5">
    <citation type="journal article" date="2005" name="Mol. Cell. Proteomics">
        <title>Quantitative phosphoproteomics applied to the yeast pheromone signaling pathway.</title>
        <authorList>
            <person name="Gruhler A."/>
            <person name="Olsen J.V."/>
            <person name="Mohammed S."/>
            <person name="Mortensen P."/>
            <person name="Faergeman N.J."/>
            <person name="Mann M."/>
            <person name="Jensen O.N."/>
        </authorList>
    </citation>
    <scope>PHOSPHORYLATION [LARGE SCALE ANALYSIS] AT SER-669</scope>
    <scope>IDENTIFICATION BY MASS SPECTROMETRY [LARGE SCALE ANALYSIS]</scope>
    <source>
        <strain>YAL6B</strain>
    </source>
</reference>
<reference key="6">
    <citation type="journal article" date="2007" name="J. Proteome Res.">
        <title>Large-scale phosphorylation analysis of alpha-factor-arrested Saccharomyces cerevisiae.</title>
        <authorList>
            <person name="Li X."/>
            <person name="Gerber S.A."/>
            <person name="Rudner A.D."/>
            <person name="Beausoleil S.A."/>
            <person name="Haas W."/>
            <person name="Villen J."/>
            <person name="Elias J.E."/>
            <person name="Gygi S.P."/>
        </authorList>
    </citation>
    <scope>PHOSPHORYLATION [LARGE SCALE ANALYSIS] AT SER-640; SER-669; SER-720 AND SER-723</scope>
    <scope>IDENTIFICATION BY MASS SPECTROMETRY [LARGE SCALE ANALYSIS]</scope>
    <source>
        <strain>ADR376</strain>
    </source>
</reference>
<reference key="7">
    <citation type="journal article" date="2007" name="Proc. Natl. Acad. Sci. U.S.A.">
        <title>Analysis of phosphorylation sites on proteins from Saccharomyces cerevisiae by electron transfer dissociation (ETD) mass spectrometry.</title>
        <authorList>
            <person name="Chi A."/>
            <person name="Huttenhower C."/>
            <person name="Geer L.Y."/>
            <person name="Coon J.J."/>
            <person name="Syka J.E.P."/>
            <person name="Bai D.L."/>
            <person name="Shabanowitz J."/>
            <person name="Burke D.J."/>
            <person name="Troyanskaya O.G."/>
            <person name="Hunt D.F."/>
        </authorList>
    </citation>
    <scope>PHOSPHORYLATION [LARGE SCALE ANALYSIS] AT SER-640 AND SER-669</scope>
    <scope>IDENTIFICATION BY MASS SPECTROMETRY [LARGE SCALE ANALYSIS]</scope>
</reference>
<reference key="8">
    <citation type="journal article" date="2008" name="Mol. Cell. Proteomics">
        <title>A multidimensional chromatography technology for in-depth phosphoproteome analysis.</title>
        <authorList>
            <person name="Albuquerque C.P."/>
            <person name="Smolka M.B."/>
            <person name="Payne S.H."/>
            <person name="Bafna V."/>
            <person name="Eng J."/>
            <person name="Zhou H."/>
        </authorList>
    </citation>
    <scope>PHOSPHORYLATION [LARGE SCALE ANALYSIS] AT SER-640; SER-669 AND SER-723</scope>
    <scope>IDENTIFICATION BY MASS SPECTROMETRY [LARGE SCALE ANALYSIS]</scope>
</reference>
<reference key="9">
    <citation type="journal article" date="2009" name="Science">
        <title>Global analysis of Cdk1 substrate phosphorylation sites provides insights into evolution.</title>
        <authorList>
            <person name="Holt L.J."/>
            <person name="Tuch B.B."/>
            <person name="Villen J."/>
            <person name="Johnson A.D."/>
            <person name="Gygi S.P."/>
            <person name="Morgan D.O."/>
        </authorList>
    </citation>
    <scope>PHOSPHORYLATION [LARGE SCALE ANALYSIS] AT SER-640; SER-669; SER-717; SER-720 AND SER-723</scope>
    <scope>IDENTIFICATION BY MASS SPECTROMETRY [LARGE SCALE ANALYSIS]</scope>
</reference>
<reference key="10">
    <citation type="journal article" date="2012" name="J. Cell Sci.">
        <title>A conserved membrane-binding domain targets proteins to organelle contact sites.</title>
        <authorList>
            <person name="Toulmay A."/>
            <person name="Prinz W.A."/>
        </authorList>
    </citation>
    <scope>SUBCELLULAR LOCATION</scope>
    <scope>DOMAIN</scope>
</reference>
<reference key="11">
    <citation type="journal article" date="2017" name="J. Cell Biol.">
        <title>An inducible ER-Golgi tether facilitates ceramide transport to alleviate lipotoxicity.</title>
        <authorList>
            <person name="Liu L.K."/>
            <person name="Choudhary V."/>
            <person name="Toulmay A."/>
            <person name="Prinz W.A."/>
        </authorList>
    </citation>
    <scope>FUNCTION</scope>
    <scope>SUBCELLULAR LOCATION</scope>
    <scope>MUTAGENESIS OF LEU-340 AND ILE-472</scope>
</reference>
<reference key="12">
    <citation type="journal article" date="2023" name="J. Cell Biol.">
        <title>Yeast Svf1 binds ceramides and contributes to sphingolipid metabolism at the ER cis-Golgi interface.</title>
        <authorList>
            <person name="Limar S."/>
            <person name="Koerner C."/>
            <person name="Martinez-Montanes F."/>
            <person name="Stancheva V.G."/>
            <person name="Wolf V.N."/>
            <person name="Walter S."/>
            <person name="Miller E.A."/>
            <person name="Ejsing C.S."/>
            <person name="Galassi V.V."/>
            <person name="Froehlich F."/>
        </authorList>
    </citation>
    <scope>IDENTIFICATION BY MASS SPECTROMETRY</scope>
    <scope>DISRUPTION PHENOTYPE</scope>
</reference>
<feature type="chain" id="PRO_0000257815" description="Nucleus-vacuole junction protein 2">
    <location>
        <begin position="1"/>
        <end position="770"/>
    </location>
</feature>
<feature type="topological domain" description="Cytoplasmic" evidence="1">
    <location>
        <begin position="1"/>
        <end position="5"/>
    </location>
</feature>
<feature type="transmembrane region" description="Helical; Signal-anchor for type II membrane protein" evidence="1">
    <location>
        <begin position="6"/>
        <end position="26"/>
    </location>
</feature>
<feature type="topological domain" description="Lumenal" evidence="1">
    <location>
        <begin position="27"/>
        <end position="770"/>
    </location>
</feature>
<feature type="domain" description="PH">
    <location>
        <begin position="114"/>
        <end position="266"/>
    </location>
</feature>
<feature type="domain" description="SMP-LTD" evidence="2">
    <location>
        <begin position="304"/>
        <end position="504"/>
    </location>
</feature>
<feature type="region of interest" description="Disordered" evidence="3">
    <location>
        <begin position="541"/>
        <end position="566"/>
    </location>
</feature>
<feature type="region of interest" description="Disordered" evidence="3">
    <location>
        <begin position="578"/>
        <end position="600"/>
    </location>
</feature>
<feature type="region of interest" description="Disordered" evidence="3">
    <location>
        <begin position="615"/>
        <end position="770"/>
    </location>
</feature>
<feature type="compositionally biased region" description="Basic and acidic residues" evidence="3">
    <location>
        <begin position="554"/>
        <end position="566"/>
    </location>
</feature>
<feature type="compositionally biased region" description="Polar residues" evidence="3">
    <location>
        <begin position="587"/>
        <end position="596"/>
    </location>
</feature>
<feature type="compositionally biased region" description="Basic and acidic residues" evidence="3">
    <location>
        <begin position="679"/>
        <end position="688"/>
    </location>
</feature>
<feature type="compositionally biased region" description="Polar residues" evidence="3">
    <location>
        <begin position="713"/>
        <end position="725"/>
    </location>
</feature>
<feature type="compositionally biased region" description="Polar residues" evidence="3">
    <location>
        <begin position="736"/>
        <end position="751"/>
    </location>
</feature>
<feature type="compositionally biased region" description="Basic and acidic residues" evidence="3">
    <location>
        <begin position="756"/>
        <end position="770"/>
    </location>
</feature>
<feature type="modified residue" description="Phosphoserine" evidence="13 14 15 16">
    <location>
        <position position="640"/>
    </location>
</feature>
<feature type="modified residue" description="Phosphoserine" evidence="12 13 14 15 16">
    <location>
        <position position="669"/>
    </location>
</feature>
<feature type="modified residue" description="Phosphoserine" evidence="16">
    <location>
        <position position="717"/>
    </location>
</feature>
<feature type="modified residue" description="Phosphoserine" evidence="14 16">
    <location>
        <position position="720"/>
    </location>
</feature>
<feature type="modified residue" description="Phosphoserine" evidence="14 15 16">
    <location>
        <position position="723"/>
    </location>
</feature>
<feature type="glycosylation site" description="N-linked (GlcNAc...) asparagine" evidence="1">
    <location>
        <position position="228"/>
    </location>
</feature>
<feature type="glycosylation site" description="N-linked (GlcNAc...) asparagine" evidence="1">
    <location>
        <position position="263"/>
    </location>
</feature>
<feature type="glycosylation site" description="N-linked (GlcNAc...) asparagine" evidence="1">
    <location>
        <position position="279"/>
    </location>
</feature>
<feature type="glycosylation site" description="N-linked (GlcNAc...) asparagine" evidence="1">
    <location>
        <position position="300"/>
    </location>
</feature>
<feature type="glycosylation site" description="N-linked (GlcNAc...) asparagine" evidence="1">
    <location>
        <position position="391"/>
    </location>
</feature>
<feature type="glycosylation site" description="N-linked (GlcNAc...) asparagine" evidence="1">
    <location>
        <position position="528"/>
    </location>
</feature>
<feature type="glycosylation site" description="N-linked (GlcNAc...) asparagine" evidence="1">
    <location>
        <position position="529"/>
    </location>
</feature>
<feature type="glycosylation site" description="N-linked (GlcNAc...) asparagine" evidence="1">
    <location>
        <position position="595"/>
    </location>
</feature>
<feature type="glycosylation site" description="N-linked (GlcNAc...) asparagine" evidence="1">
    <location>
        <position position="620"/>
    </location>
</feature>
<feature type="glycosylation site" description="N-linked (GlcNAc...) asparagine" evidence="1">
    <location>
        <position position="700"/>
    </location>
</feature>
<feature type="glycosylation site" description="N-linked (GlcNAc...) asparagine" evidence="1">
    <location>
        <position position="718"/>
    </location>
</feature>
<feature type="mutagenesis site" description="Failure to mediate ceramide transport; when associated with A-472." evidence="7">
    <original>L</original>
    <variation>A</variation>
    <location>
        <position position="340"/>
    </location>
</feature>
<feature type="mutagenesis site" description="Failure to mediate ceramide transport; when associated with A-340." evidence="7">
    <original>I</original>
    <variation>A</variation>
    <location>
        <position position="472"/>
    </location>
</feature>
<accession>Q06833</accession>
<accession>D6W491</accession>
<evidence type="ECO:0000255" key="1"/>
<evidence type="ECO:0000255" key="2">
    <source>
        <dbReference type="PROSITE-ProRule" id="PRU01194"/>
    </source>
</evidence>
<evidence type="ECO:0000256" key="3">
    <source>
        <dbReference type="SAM" id="MobiDB-lite"/>
    </source>
</evidence>
<evidence type="ECO:0000269" key="4">
    <source>
    </source>
</evidence>
<evidence type="ECO:0000269" key="5">
    <source>
    </source>
</evidence>
<evidence type="ECO:0000269" key="6">
    <source>
    </source>
</evidence>
<evidence type="ECO:0000269" key="7">
    <source>
    </source>
</evidence>
<evidence type="ECO:0000269" key="8">
    <source>
    </source>
</evidence>
<evidence type="ECO:0000303" key="9">
    <source>
    </source>
</evidence>
<evidence type="ECO:0000305" key="10"/>
<evidence type="ECO:0000312" key="11">
    <source>
        <dbReference type="SGD" id="S000006295"/>
    </source>
</evidence>
<evidence type="ECO:0007744" key="12">
    <source>
    </source>
</evidence>
<evidence type="ECO:0007744" key="13">
    <source>
    </source>
</evidence>
<evidence type="ECO:0007744" key="14">
    <source>
    </source>
</evidence>
<evidence type="ECO:0007744" key="15">
    <source>
    </source>
</evidence>
<evidence type="ECO:0007744" key="16">
    <source>
    </source>
</evidence>
<comment type="function">
    <text evidence="7">During endoplasmic reticulum (ER) stress or when cellular ceramide levels increase, induces contacts between the ER and medial-Golgi complex to facilitate non-vesicular transport of ceramides from the ER to the Golgi complex where they are converted to complex sphingolipids, preventing toxic ceramide accumulation.</text>
</comment>
<comment type="interaction">
    <interactant intactId="EBI-37290">
        <id>Q06833</id>
    </interactant>
    <interactant intactId="EBI-3437">
        <id>P47068</id>
        <label>BBC1</label>
    </interactant>
    <organismsDiffer>false</organismsDiffer>
    <experiments>2</experiments>
</comment>
<comment type="interaction">
    <interactant intactId="EBI-37290">
        <id>Q06833</id>
    </interactant>
    <interactant intactId="EBI-14500">
        <id>P39743</id>
        <label>RVS167</label>
    </interactant>
    <organismsDiffer>false</organismsDiffer>
    <experiments>3</experiments>
</comment>
<comment type="subcellular location">
    <subcellularLocation>
        <location evidence="4">Endoplasmic reticulum membrane</location>
        <topology evidence="10">Single-pass type II membrane protein</topology>
    </subcellularLocation>
    <subcellularLocation>
        <location evidence="6">Nucleus membrane</location>
        <topology evidence="10">Single-pass type II membrane protein</topology>
    </subcellularLocation>
    <text evidence="6 7">Enriched at the nucleus-vacuole junction where it becomes increasingly concentrated as cells enter into the late-logarithmic growth phase (PubMed:22250200). During endoplasmic reticulum (ER) stress, localizes to ER-Golgi contacts (PubMed:28011845).</text>
</comment>
<comment type="domain">
    <text evidence="2 6">The SMP-LTD domain is a barrel-like domain that can bind various types of glycerophospholipids in its interior and mediate their transfer between two adjacent bilayers.</text>
</comment>
<comment type="disruption phenotype">
    <text evidence="8">Leads to abnormal cellular complex sphingolipid levels (PubMed:36897280). Simultaneous knockout of SVF1 to leads to myriocin sensitivity (sphingosine biosynthesis inhibitor) (PubMed:36897280).</text>
</comment>
<comment type="miscellaneous">
    <text evidence="5">Present with 36500 molecules/cell in log phase SD medium.</text>
</comment>
<organism>
    <name type="scientific">Saccharomyces cerevisiae (strain ATCC 204508 / S288c)</name>
    <name type="common">Baker's yeast</name>
    <dbReference type="NCBI Taxonomy" id="559292"/>
    <lineage>
        <taxon>Eukaryota</taxon>
        <taxon>Fungi</taxon>
        <taxon>Dikarya</taxon>
        <taxon>Ascomycota</taxon>
        <taxon>Saccharomycotina</taxon>
        <taxon>Saccharomycetes</taxon>
        <taxon>Saccharomycetales</taxon>
        <taxon>Saccharomycetaceae</taxon>
        <taxon>Saccharomyces</taxon>
    </lineage>
</organism>
<name>NVJ2_YEAST</name>
<gene>
    <name evidence="9 11" type="primary">NVJ2</name>
    <name type="ordered locus">YPR091C</name>
</gene>
<sequence>MASLKVFLAVYLLGGITFLPLVLFTLYKIHLLYSNLKSASKKELDHDTADEIDEKTRLLARDIDPEFKARKLEEQLGVKVFNKGWITVTKQYYYHSSEVAVILKNSNNNKDSDTALQEQILQRTDLKKKQRFFAVLRHGNLFLYKDDSQNANLVHAISLQNRFITIWPRFDELGKEELPDASLFTKRTCIAIFKNDLVSIDSKNHNVILPHFDPLTSAESNNGDISTNDTTHEYQSQFHSSNQFFLYFDNNMDKEDWYYQLINASKNSNSLSTGLLDPNVSANAAHLKTKDMLQLIQDINSTENQLTTKWLNALLGRLFLSLQQTDTLNKFIHEKICKKLNKIKTPGFLDDLVVEKVDVGDSAPLFTSPELLELSPEGSTKIAIDVQYRGNLTIIIATKASINLGSRFKQREVSLQLSIKIKEFSGPLLFLIKPPPSNRIWYAFRTEPIMDFEIEPIVSSSKLSYNVVTNAIKSKFAEAVKESLVVPFMDDIVFYPTPNEVYRGGIWEEQDPEAAARARTAAAASDMNNTSAKEHLEALQEGGMKTQSRIKKALRPERKKENLKDLVDASGVATKTTTQTTVTTATNDDVSSSENSTKSRKYFKNSIKKIGRWYKDNVGNSSDTEDMDEIDVQDKKNDDSADERESDNPILTSNPKMISNRRPVPRRPSQPLNTLSPKLEGRKEKDTENFPVPPSASNMNASKMFANKENRKFSVSSNDSQNSLKNGDPHVKASKLESSQAFVKKTSQNRFNDGFFKQDLEFEEQREPKL</sequence>